<protein>
    <recommendedName>
        <fullName evidence="1">LexA repressor</fullName>
        <ecNumber evidence="1">3.4.21.88</ecNumber>
    </recommendedName>
</protein>
<feature type="chain" id="PRO_0000322728" description="LexA repressor">
    <location>
        <begin position="1"/>
        <end position="267"/>
    </location>
</feature>
<feature type="DNA-binding region" description="H-T-H motif" evidence="1">
    <location>
        <begin position="65"/>
        <end position="85"/>
    </location>
</feature>
<feature type="region of interest" description="Disordered" evidence="2">
    <location>
        <begin position="1"/>
        <end position="44"/>
    </location>
</feature>
<feature type="region of interest" description="Disordered" evidence="2">
    <location>
        <begin position="111"/>
        <end position="140"/>
    </location>
</feature>
<feature type="compositionally biased region" description="Basic and acidic residues" evidence="2">
    <location>
        <begin position="20"/>
        <end position="38"/>
    </location>
</feature>
<feature type="compositionally biased region" description="Polar residues" evidence="2">
    <location>
        <begin position="112"/>
        <end position="129"/>
    </location>
</feature>
<feature type="active site" description="For autocatalytic cleavage activity" evidence="1">
    <location>
        <position position="191"/>
    </location>
</feature>
<feature type="active site" description="For autocatalytic cleavage activity" evidence="1">
    <location>
        <position position="228"/>
    </location>
</feature>
<feature type="site" description="Cleavage; by autolysis" evidence="1">
    <location>
        <begin position="156"/>
        <end position="157"/>
    </location>
</feature>
<comment type="function">
    <text evidence="1">Represses a number of genes involved in the response to DNA damage (SOS response), including recA and lexA. In the presence of single-stranded DNA, RecA interacts with LexA causing an autocatalytic cleavage which disrupts the DNA-binding part of LexA, leading to derepression of the SOS regulon and eventually DNA repair.</text>
</comment>
<comment type="catalytic activity">
    <reaction evidence="1">
        <text>Hydrolysis of Ala-|-Gly bond in repressor LexA.</text>
        <dbReference type="EC" id="3.4.21.88"/>
    </reaction>
</comment>
<comment type="subunit">
    <text evidence="1">Homodimer.</text>
</comment>
<comment type="similarity">
    <text evidence="1">Belongs to the peptidase S24 family.</text>
</comment>
<gene>
    <name evidence="1" type="primary">lexA</name>
    <name type="ordered locus">jk1106</name>
</gene>
<accession>Q4JV87</accession>
<reference key="1">
    <citation type="journal article" date="2005" name="J. Bacteriol.">
        <title>Complete genome sequence and analysis of the multiresistant nosocomial pathogen Corynebacterium jeikeium K411, a lipid-requiring bacterium of the human skin flora.</title>
        <authorList>
            <person name="Tauch A."/>
            <person name="Kaiser O."/>
            <person name="Hain T."/>
            <person name="Goesmann A."/>
            <person name="Weisshaar B."/>
            <person name="Albersmeier A."/>
            <person name="Bekel T."/>
            <person name="Bischoff N."/>
            <person name="Brune I."/>
            <person name="Chakraborty T."/>
            <person name="Kalinowski J."/>
            <person name="Meyer F."/>
            <person name="Rupp O."/>
            <person name="Schneiker S."/>
            <person name="Viehoever P."/>
            <person name="Puehler A."/>
        </authorList>
    </citation>
    <scope>NUCLEOTIDE SEQUENCE [LARGE SCALE GENOMIC DNA]</scope>
    <source>
        <strain>K411</strain>
    </source>
</reference>
<organism>
    <name type="scientific">Corynebacterium jeikeium (strain K411)</name>
    <dbReference type="NCBI Taxonomy" id="306537"/>
    <lineage>
        <taxon>Bacteria</taxon>
        <taxon>Bacillati</taxon>
        <taxon>Actinomycetota</taxon>
        <taxon>Actinomycetes</taxon>
        <taxon>Mycobacteriales</taxon>
        <taxon>Corynebacteriaceae</taxon>
        <taxon>Corynebacterium</taxon>
    </lineage>
</organism>
<sequence>MSIDESSDNPTPRPKLGRPPKSEADKRAEKEAQKDGKKPALSTRQRRILEVIRDSTIIRGYPPSIREIADAVGLHSTSSVSYHLTQLEKRGYLRRDGKRPRAVDVRAFDGGQLTNESTKKNAGSPQPTSAAIPEPTTEGETMPEATYVPVVGQIAAGAPILAEQNVEAHFPLPQELVGNGELFLLQVVGESMHDAGIFNGDWVVVRSQSVAEFGDFVAAMIDGEATVKEFQKDADGLWLIPHNPLFEPIPAEEATILGKVAAVLRKI</sequence>
<proteinExistence type="inferred from homology"/>
<evidence type="ECO:0000255" key="1">
    <source>
        <dbReference type="HAMAP-Rule" id="MF_00015"/>
    </source>
</evidence>
<evidence type="ECO:0000256" key="2">
    <source>
        <dbReference type="SAM" id="MobiDB-lite"/>
    </source>
</evidence>
<dbReference type="EC" id="3.4.21.88" evidence="1"/>
<dbReference type="EMBL" id="CR931997">
    <property type="protein sequence ID" value="CAI37270.1"/>
    <property type="molecule type" value="Genomic_DNA"/>
</dbReference>
<dbReference type="SMR" id="Q4JV87"/>
<dbReference type="STRING" id="306537.jk1106"/>
<dbReference type="MEROPS" id="S24.001"/>
<dbReference type="KEGG" id="cjk:jk1106"/>
<dbReference type="PATRIC" id="fig|306537.10.peg.1119"/>
<dbReference type="eggNOG" id="COG1974">
    <property type="taxonomic scope" value="Bacteria"/>
</dbReference>
<dbReference type="HOGENOM" id="CLU_066192_45_0_11"/>
<dbReference type="OrthoDB" id="9802364at2"/>
<dbReference type="Proteomes" id="UP000000545">
    <property type="component" value="Chromosome"/>
</dbReference>
<dbReference type="GO" id="GO:0003677">
    <property type="term" value="F:DNA binding"/>
    <property type="evidence" value="ECO:0007669"/>
    <property type="project" value="UniProtKB-UniRule"/>
</dbReference>
<dbReference type="GO" id="GO:0004252">
    <property type="term" value="F:serine-type endopeptidase activity"/>
    <property type="evidence" value="ECO:0007669"/>
    <property type="project" value="UniProtKB-UniRule"/>
</dbReference>
<dbReference type="GO" id="GO:0006281">
    <property type="term" value="P:DNA repair"/>
    <property type="evidence" value="ECO:0007669"/>
    <property type="project" value="UniProtKB-UniRule"/>
</dbReference>
<dbReference type="GO" id="GO:0006260">
    <property type="term" value="P:DNA replication"/>
    <property type="evidence" value="ECO:0007669"/>
    <property type="project" value="UniProtKB-UniRule"/>
</dbReference>
<dbReference type="GO" id="GO:0045892">
    <property type="term" value="P:negative regulation of DNA-templated transcription"/>
    <property type="evidence" value="ECO:0007669"/>
    <property type="project" value="UniProtKB-UniRule"/>
</dbReference>
<dbReference type="GO" id="GO:0006508">
    <property type="term" value="P:proteolysis"/>
    <property type="evidence" value="ECO:0007669"/>
    <property type="project" value="InterPro"/>
</dbReference>
<dbReference type="GO" id="GO:0009432">
    <property type="term" value="P:SOS response"/>
    <property type="evidence" value="ECO:0007669"/>
    <property type="project" value="UniProtKB-UniRule"/>
</dbReference>
<dbReference type="CDD" id="cd00090">
    <property type="entry name" value="HTH_ARSR"/>
    <property type="match status" value="1"/>
</dbReference>
<dbReference type="CDD" id="cd06529">
    <property type="entry name" value="S24_LexA-like"/>
    <property type="match status" value="1"/>
</dbReference>
<dbReference type="FunFam" id="2.10.109.10:FF:000001">
    <property type="entry name" value="LexA repressor"/>
    <property type="match status" value="1"/>
</dbReference>
<dbReference type="Gene3D" id="2.10.109.10">
    <property type="entry name" value="Umud Fragment, subunit A"/>
    <property type="match status" value="1"/>
</dbReference>
<dbReference type="Gene3D" id="1.10.10.10">
    <property type="entry name" value="Winged helix-like DNA-binding domain superfamily/Winged helix DNA-binding domain"/>
    <property type="match status" value="1"/>
</dbReference>
<dbReference type="HAMAP" id="MF_00015">
    <property type="entry name" value="LexA"/>
    <property type="match status" value="1"/>
</dbReference>
<dbReference type="InterPro" id="IPR011991">
    <property type="entry name" value="ArsR-like_HTH"/>
</dbReference>
<dbReference type="InterPro" id="IPR006200">
    <property type="entry name" value="LexA"/>
</dbReference>
<dbReference type="InterPro" id="IPR039418">
    <property type="entry name" value="LexA-like"/>
</dbReference>
<dbReference type="InterPro" id="IPR036286">
    <property type="entry name" value="LexA/Signal_pep-like_sf"/>
</dbReference>
<dbReference type="InterPro" id="IPR006199">
    <property type="entry name" value="LexA_DNA-bd_dom"/>
</dbReference>
<dbReference type="InterPro" id="IPR050077">
    <property type="entry name" value="LexA_repressor"/>
</dbReference>
<dbReference type="InterPro" id="IPR006197">
    <property type="entry name" value="Peptidase_S24_LexA"/>
</dbReference>
<dbReference type="InterPro" id="IPR015927">
    <property type="entry name" value="Peptidase_S24_S26A/B/C"/>
</dbReference>
<dbReference type="InterPro" id="IPR036388">
    <property type="entry name" value="WH-like_DNA-bd_sf"/>
</dbReference>
<dbReference type="InterPro" id="IPR036390">
    <property type="entry name" value="WH_DNA-bd_sf"/>
</dbReference>
<dbReference type="NCBIfam" id="TIGR00498">
    <property type="entry name" value="lexA"/>
    <property type="match status" value="1"/>
</dbReference>
<dbReference type="PANTHER" id="PTHR33516">
    <property type="entry name" value="LEXA REPRESSOR"/>
    <property type="match status" value="1"/>
</dbReference>
<dbReference type="PANTHER" id="PTHR33516:SF2">
    <property type="entry name" value="LEXA REPRESSOR-RELATED"/>
    <property type="match status" value="1"/>
</dbReference>
<dbReference type="Pfam" id="PF01726">
    <property type="entry name" value="LexA_DNA_bind"/>
    <property type="match status" value="1"/>
</dbReference>
<dbReference type="Pfam" id="PF00717">
    <property type="entry name" value="Peptidase_S24"/>
    <property type="match status" value="1"/>
</dbReference>
<dbReference type="PRINTS" id="PR00726">
    <property type="entry name" value="LEXASERPTASE"/>
</dbReference>
<dbReference type="SUPFAM" id="SSF51306">
    <property type="entry name" value="LexA/Signal peptidase"/>
    <property type="match status" value="1"/>
</dbReference>
<dbReference type="SUPFAM" id="SSF46785">
    <property type="entry name" value="Winged helix' DNA-binding domain"/>
    <property type="match status" value="1"/>
</dbReference>
<name>LEXA_CORJK</name>
<keyword id="KW-0068">Autocatalytic cleavage</keyword>
<keyword id="KW-0227">DNA damage</keyword>
<keyword id="KW-0234">DNA repair</keyword>
<keyword id="KW-0235">DNA replication</keyword>
<keyword id="KW-0238">DNA-binding</keyword>
<keyword id="KW-0378">Hydrolase</keyword>
<keyword id="KW-1185">Reference proteome</keyword>
<keyword id="KW-0678">Repressor</keyword>
<keyword id="KW-0742">SOS response</keyword>
<keyword id="KW-0804">Transcription</keyword>
<keyword id="KW-0805">Transcription regulation</keyword>